<keyword id="KW-0067">ATP-binding</keyword>
<keyword id="KW-0963">Cytoplasm</keyword>
<keyword id="KW-0238">DNA-binding</keyword>
<keyword id="KW-0413">Isomerase</keyword>
<keyword id="KW-0460">Magnesium</keyword>
<keyword id="KW-0479">Metal-binding</keyword>
<keyword id="KW-0547">Nucleotide-binding</keyword>
<keyword id="KW-1185">Reference proteome</keyword>
<keyword id="KW-0799">Topoisomerase</keyword>
<reference key="1">
    <citation type="journal article" date="2000" name="Nature">
        <title>The genome sequence of the food-borne pathogen Campylobacter jejuni reveals hypervariable sequences.</title>
        <authorList>
            <person name="Parkhill J."/>
            <person name="Wren B.W."/>
            <person name="Mungall K.L."/>
            <person name="Ketley J.M."/>
            <person name="Churcher C.M."/>
            <person name="Basham D."/>
            <person name="Chillingworth T."/>
            <person name="Davies R.M."/>
            <person name="Feltwell T."/>
            <person name="Holroyd S."/>
            <person name="Jagels K."/>
            <person name="Karlyshev A.V."/>
            <person name="Moule S."/>
            <person name="Pallen M.J."/>
            <person name="Penn C.W."/>
            <person name="Quail M.A."/>
            <person name="Rajandream M.A."/>
            <person name="Rutherford K.M."/>
            <person name="van Vliet A.H.M."/>
            <person name="Whitehead S."/>
            <person name="Barrell B.G."/>
        </authorList>
    </citation>
    <scope>NUCLEOTIDE SEQUENCE [LARGE SCALE GENOMIC DNA]</scope>
    <source>
        <strain>ATCC 700819 / NCTC 11168</strain>
    </source>
</reference>
<reference key="2">
    <citation type="submission" date="1998-09" db="EMBL/GenBank/DDBJ databases">
        <title>Differentiation of Campylobacter jejuni strains of serotype O19 from non-O19 strains by polymerase chain reaction.</title>
        <authorList>
            <person name="Misawa N."/>
            <person name="Allos B.M."/>
            <person name="Blaser M.J."/>
        </authorList>
    </citation>
    <scope>NUCLEOTIDE SEQUENCE [GENOMIC DNA] OF 30-714</scope>
    <source>
        <strain>D450</strain>
    </source>
</reference>
<comment type="function">
    <text evidence="1">A type II topoisomerase that negatively supercoils closed circular double-stranded (ds) DNA in an ATP-dependent manner to modulate DNA topology and maintain chromosomes in an underwound state. Negative supercoiling favors strand separation, and DNA replication, transcription, recombination and repair, all of which involve strand separation. Also able to catalyze the interconversion of other topological isomers of dsDNA rings, including catenanes and knotted rings. Type II topoisomerases break and join 2 DNA strands simultaneously in an ATP-dependent manner.</text>
</comment>
<comment type="catalytic activity">
    <reaction evidence="1">
        <text>ATP-dependent breakage, passage and rejoining of double-stranded DNA.</text>
        <dbReference type="EC" id="5.6.2.2"/>
    </reaction>
</comment>
<comment type="cofactor">
    <cofactor evidence="1">
        <name>Mg(2+)</name>
        <dbReference type="ChEBI" id="CHEBI:18420"/>
    </cofactor>
    <cofactor evidence="1">
        <name>Mn(2+)</name>
        <dbReference type="ChEBI" id="CHEBI:29035"/>
    </cofactor>
    <cofactor evidence="1">
        <name>Ca(2+)</name>
        <dbReference type="ChEBI" id="CHEBI:29108"/>
    </cofactor>
    <text evidence="1">Binds two Mg(2+) per subunit. The magnesium ions form salt bridges with both the protein and the DNA. Can also accept other divalent metal cations, such as Mn(2+) or Ca(2+).</text>
</comment>
<comment type="subunit">
    <text evidence="1">Heterotetramer, composed of two GyrA and two GyrB chains. In the heterotetramer, GyrA contains the active site tyrosine that forms a transient covalent intermediate with DNA, while GyrB binds cofactors and catalyzes ATP hydrolysis.</text>
</comment>
<comment type="subcellular location">
    <subcellularLocation>
        <location evidence="1">Cytoplasm</location>
    </subcellularLocation>
</comment>
<comment type="miscellaneous">
    <text evidence="1">Few gyrases are as efficient as E.coli at forming negative supercoils. Not all organisms have 2 type II topoisomerases; in organisms with a single type II topoisomerase this enzyme also has to decatenate newly replicated chromosomes.</text>
</comment>
<comment type="similarity">
    <text evidence="1">Belongs to the type II topoisomerase GyrB family.</text>
</comment>
<dbReference type="EC" id="5.6.2.2" evidence="1"/>
<dbReference type="EMBL" id="AL111168">
    <property type="protein sequence ID" value="CAL34184.1"/>
    <property type="molecule type" value="Genomic_DNA"/>
</dbReference>
<dbReference type="EMBL" id="AF093760">
    <property type="protein sequence ID" value="AAC62775.1"/>
    <property type="molecule type" value="Genomic_DNA"/>
</dbReference>
<dbReference type="PIR" id="F81415">
    <property type="entry name" value="F81415"/>
</dbReference>
<dbReference type="RefSeq" id="WP_002858833.1">
    <property type="nucleotide sequence ID" value="NZ_SZUC01000002.1"/>
</dbReference>
<dbReference type="RefSeq" id="YP_002343475.1">
    <property type="nucleotide sequence ID" value="NC_002163.1"/>
</dbReference>
<dbReference type="SMR" id="O87667"/>
<dbReference type="IntAct" id="O87667">
    <property type="interactions" value="1"/>
</dbReference>
<dbReference type="STRING" id="192222.Cj0003"/>
<dbReference type="PaxDb" id="192222-Cj0003"/>
<dbReference type="EnsemblBacteria" id="CAL34184">
    <property type="protein sequence ID" value="CAL34184"/>
    <property type="gene ID" value="Cj0003"/>
</dbReference>
<dbReference type="GeneID" id="904343"/>
<dbReference type="KEGG" id="cje:Cj0003"/>
<dbReference type="PATRIC" id="fig|192222.6.peg.3"/>
<dbReference type="eggNOG" id="COG0187">
    <property type="taxonomic scope" value="Bacteria"/>
</dbReference>
<dbReference type="HOGENOM" id="CLU_006146_4_1_7"/>
<dbReference type="OrthoDB" id="9802808at2"/>
<dbReference type="PHI-base" id="PHI:9791"/>
<dbReference type="Proteomes" id="UP000000799">
    <property type="component" value="Chromosome"/>
</dbReference>
<dbReference type="GO" id="GO:0005694">
    <property type="term" value="C:chromosome"/>
    <property type="evidence" value="ECO:0007669"/>
    <property type="project" value="InterPro"/>
</dbReference>
<dbReference type="GO" id="GO:0005737">
    <property type="term" value="C:cytoplasm"/>
    <property type="evidence" value="ECO:0007669"/>
    <property type="project" value="UniProtKB-SubCell"/>
</dbReference>
<dbReference type="GO" id="GO:0005524">
    <property type="term" value="F:ATP binding"/>
    <property type="evidence" value="ECO:0007669"/>
    <property type="project" value="UniProtKB-UniRule"/>
</dbReference>
<dbReference type="GO" id="GO:0003677">
    <property type="term" value="F:DNA binding"/>
    <property type="evidence" value="ECO:0007669"/>
    <property type="project" value="UniProtKB-KW"/>
</dbReference>
<dbReference type="GO" id="GO:0003918">
    <property type="term" value="F:DNA topoisomerase type II (double strand cut, ATP-hydrolyzing) activity"/>
    <property type="evidence" value="ECO:0007669"/>
    <property type="project" value="UniProtKB-UniRule"/>
</dbReference>
<dbReference type="GO" id="GO:0046872">
    <property type="term" value="F:metal ion binding"/>
    <property type="evidence" value="ECO:0007669"/>
    <property type="project" value="UniProtKB-KW"/>
</dbReference>
<dbReference type="GO" id="GO:0006265">
    <property type="term" value="P:DNA topological change"/>
    <property type="evidence" value="ECO:0007669"/>
    <property type="project" value="UniProtKB-UniRule"/>
</dbReference>
<dbReference type="GO" id="GO:0006261">
    <property type="term" value="P:DNA-templated DNA replication"/>
    <property type="evidence" value="ECO:0007669"/>
    <property type="project" value="UniProtKB-UniRule"/>
</dbReference>
<dbReference type="CDD" id="cd16928">
    <property type="entry name" value="HATPase_GyrB-like"/>
    <property type="match status" value="1"/>
</dbReference>
<dbReference type="CDD" id="cd00822">
    <property type="entry name" value="TopoII_Trans_DNA_gyrase"/>
    <property type="match status" value="1"/>
</dbReference>
<dbReference type="CDD" id="cd03366">
    <property type="entry name" value="TOPRIM_TopoIIA_GyrB"/>
    <property type="match status" value="1"/>
</dbReference>
<dbReference type="FunFam" id="3.30.230.10:FF:000005">
    <property type="entry name" value="DNA gyrase subunit B"/>
    <property type="match status" value="1"/>
</dbReference>
<dbReference type="FunFam" id="3.30.565.10:FF:000002">
    <property type="entry name" value="DNA gyrase subunit B"/>
    <property type="match status" value="1"/>
</dbReference>
<dbReference type="FunFam" id="3.40.50.670:FF:000001">
    <property type="entry name" value="DNA topoisomerase 2"/>
    <property type="match status" value="1"/>
</dbReference>
<dbReference type="Gene3D" id="3.30.230.10">
    <property type="match status" value="1"/>
</dbReference>
<dbReference type="Gene3D" id="3.40.50.670">
    <property type="match status" value="2"/>
</dbReference>
<dbReference type="Gene3D" id="3.30.565.10">
    <property type="entry name" value="Histidine kinase-like ATPase, C-terminal domain"/>
    <property type="match status" value="1"/>
</dbReference>
<dbReference type="HAMAP" id="MF_01898">
    <property type="entry name" value="GyrB"/>
    <property type="match status" value="1"/>
</dbReference>
<dbReference type="InterPro" id="IPR002288">
    <property type="entry name" value="DNA_gyrase_B_C"/>
</dbReference>
<dbReference type="InterPro" id="IPR011557">
    <property type="entry name" value="GyrB"/>
</dbReference>
<dbReference type="InterPro" id="IPR036890">
    <property type="entry name" value="HATPase_C_sf"/>
</dbReference>
<dbReference type="InterPro" id="IPR020568">
    <property type="entry name" value="Ribosomal_Su5_D2-typ_SF"/>
</dbReference>
<dbReference type="InterPro" id="IPR014721">
    <property type="entry name" value="Ribsml_uS5_D2-typ_fold_subgr"/>
</dbReference>
<dbReference type="InterPro" id="IPR001241">
    <property type="entry name" value="Topo_IIA"/>
</dbReference>
<dbReference type="InterPro" id="IPR013760">
    <property type="entry name" value="Topo_IIA-like_dom_sf"/>
</dbReference>
<dbReference type="InterPro" id="IPR000565">
    <property type="entry name" value="Topo_IIA_B"/>
</dbReference>
<dbReference type="InterPro" id="IPR013759">
    <property type="entry name" value="Topo_IIA_B_C"/>
</dbReference>
<dbReference type="InterPro" id="IPR013506">
    <property type="entry name" value="Topo_IIA_bsu_dom2"/>
</dbReference>
<dbReference type="InterPro" id="IPR018522">
    <property type="entry name" value="TopoIIA_CS"/>
</dbReference>
<dbReference type="InterPro" id="IPR006171">
    <property type="entry name" value="TOPRIM_dom"/>
</dbReference>
<dbReference type="InterPro" id="IPR034160">
    <property type="entry name" value="TOPRIM_GyrB"/>
</dbReference>
<dbReference type="NCBIfam" id="TIGR01059">
    <property type="entry name" value="gyrB"/>
    <property type="match status" value="1"/>
</dbReference>
<dbReference type="NCBIfam" id="NF004189">
    <property type="entry name" value="PRK05644.1"/>
    <property type="match status" value="1"/>
</dbReference>
<dbReference type="NCBIfam" id="NF011501">
    <property type="entry name" value="PRK14939.1"/>
    <property type="match status" value="1"/>
</dbReference>
<dbReference type="PANTHER" id="PTHR45866:SF1">
    <property type="entry name" value="DNA GYRASE SUBUNIT B, MITOCHONDRIAL"/>
    <property type="match status" value="1"/>
</dbReference>
<dbReference type="PANTHER" id="PTHR45866">
    <property type="entry name" value="DNA GYRASE/TOPOISOMERASE SUBUNIT B"/>
    <property type="match status" value="1"/>
</dbReference>
<dbReference type="Pfam" id="PF00204">
    <property type="entry name" value="DNA_gyraseB"/>
    <property type="match status" value="1"/>
</dbReference>
<dbReference type="Pfam" id="PF00986">
    <property type="entry name" value="DNA_gyraseB_C"/>
    <property type="match status" value="1"/>
</dbReference>
<dbReference type="Pfam" id="PF02518">
    <property type="entry name" value="HATPase_c"/>
    <property type="match status" value="1"/>
</dbReference>
<dbReference type="Pfam" id="PF01751">
    <property type="entry name" value="Toprim"/>
    <property type="match status" value="1"/>
</dbReference>
<dbReference type="PRINTS" id="PR01159">
    <property type="entry name" value="DNAGYRASEB"/>
</dbReference>
<dbReference type="PRINTS" id="PR00418">
    <property type="entry name" value="TPI2FAMILY"/>
</dbReference>
<dbReference type="SMART" id="SM00387">
    <property type="entry name" value="HATPase_c"/>
    <property type="match status" value="1"/>
</dbReference>
<dbReference type="SMART" id="SM00433">
    <property type="entry name" value="TOP2c"/>
    <property type="match status" value="1"/>
</dbReference>
<dbReference type="SUPFAM" id="SSF55874">
    <property type="entry name" value="ATPase domain of HSP90 chaperone/DNA topoisomerase II/histidine kinase"/>
    <property type="match status" value="1"/>
</dbReference>
<dbReference type="SUPFAM" id="SSF54211">
    <property type="entry name" value="Ribosomal protein S5 domain 2-like"/>
    <property type="match status" value="1"/>
</dbReference>
<dbReference type="SUPFAM" id="SSF56719">
    <property type="entry name" value="Type II DNA topoisomerase"/>
    <property type="match status" value="1"/>
</dbReference>
<dbReference type="PROSITE" id="PS00177">
    <property type="entry name" value="TOPOISOMERASE_II"/>
    <property type="match status" value="1"/>
</dbReference>
<dbReference type="PROSITE" id="PS50880">
    <property type="entry name" value="TOPRIM"/>
    <property type="match status" value="1"/>
</dbReference>
<feature type="chain" id="PRO_0000145301" description="DNA gyrase subunit B">
    <location>
        <begin position="1"/>
        <end position="769"/>
    </location>
</feature>
<feature type="domain" description="Toprim" evidence="1">
    <location>
        <begin position="414"/>
        <end position="528"/>
    </location>
</feature>
<feature type="binding site" evidence="1">
    <location>
        <position position="420"/>
    </location>
    <ligand>
        <name>Mg(2+)</name>
        <dbReference type="ChEBI" id="CHEBI:18420"/>
        <label>1</label>
        <note>catalytic</note>
    </ligand>
</feature>
<feature type="binding site" evidence="1">
    <location>
        <position position="493"/>
    </location>
    <ligand>
        <name>Mg(2+)</name>
        <dbReference type="ChEBI" id="CHEBI:18420"/>
        <label>1</label>
        <note>catalytic</note>
    </ligand>
</feature>
<feature type="binding site" evidence="1">
    <location>
        <position position="493"/>
    </location>
    <ligand>
        <name>Mg(2+)</name>
        <dbReference type="ChEBI" id="CHEBI:18420"/>
        <label>2</label>
    </ligand>
</feature>
<feature type="binding site" evidence="1">
    <location>
        <position position="495"/>
    </location>
    <ligand>
        <name>Mg(2+)</name>
        <dbReference type="ChEBI" id="CHEBI:18420"/>
        <label>2</label>
    </ligand>
</feature>
<feature type="site" description="Interaction with DNA" evidence="1">
    <location>
        <position position="445"/>
    </location>
</feature>
<feature type="site" description="Interaction with DNA" evidence="1">
    <location>
        <position position="448"/>
    </location>
</feature>
<feature type="sequence conflict" description="In Ref. 2; AAC62775." evidence="2" ref="2">
    <original>E</original>
    <variation>K</variation>
    <location>
        <position position="217"/>
    </location>
</feature>
<feature type="sequence conflict" description="In Ref. 2; AAC62775." evidence="2" ref="2">
    <original>T</original>
    <variation>I</variation>
    <location>
        <position position="225"/>
    </location>
</feature>
<feature type="sequence conflict" description="In Ref. 2; AAC62775." evidence="2" ref="2">
    <original>D</original>
    <variation>E</variation>
    <location>
        <position position="309"/>
    </location>
</feature>
<feature type="sequence conflict" description="In Ref. 2; AAC62775." evidence="2" ref="2">
    <original>I</original>
    <variation>V</variation>
    <location>
        <position position="318"/>
    </location>
</feature>
<feature type="sequence conflict" description="In Ref. 2; AAC62775." evidence="2" ref="2">
    <original>Q</original>
    <variation>P</variation>
    <location>
        <position position="464"/>
    </location>
</feature>
<feature type="sequence conflict" description="In Ref. 2; AAC62775." evidence="2" ref="2">
    <original>RS</original>
    <variation>IG</variation>
    <location>
        <begin position="676"/>
        <end position="677"/>
    </location>
</feature>
<organism>
    <name type="scientific">Campylobacter jejuni subsp. jejuni serotype O:2 (strain ATCC 700819 / NCTC 11168)</name>
    <dbReference type="NCBI Taxonomy" id="192222"/>
    <lineage>
        <taxon>Bacteria</taxon>
        <taxon>Pseudomonadati</taxon>
        <taxon>Campylobacterota</taxon>
        <taxon>Epsilonproteobacteria</taxon>
        <taxon>Campylobacterales</taxon>
        <taxon>Campylobacteraceae</taxon>
        <taxon>Campylobacter</taxon>
    </lineage>
</organism>
<name>GYRB_CAMJE</name>
<proteinExistence type="inferred from homology"/>
<accession>O87667</accession>
<accession>Q0PCC2</accession>
<accession>Q9PJA8</accession>
<evidence type="ECO:0000255" key="1">
    <source>
        <dbReference type="HAMAP-Rule" id="MF_01898"/>
    </source>
</evidence>
<evidence type="ECO:0000305" key="2"/>
<protein>
    <recommendedName>
        <fullName evidence="1">DNA gyrase subunit B</fullName>
        <ecNumber evidence="1">5.6.2.2</ecNumber>
    </recommendedName>
</protein>
<sequence>MQENYGASNIKVLKGLEAVRKRPGMYIGDTNIGGLHHMIYEVVDNSIDEAMAGHCDTIDVEITTEGSCIVSDNGRGIPVDMHPTENMPTLTVVLTVLHAGGKFDKDTYKVSGGLHGVGVSVVNALSKKLVATVERNGEIYRQEFSEGKVISEFGVIGKSKKTGTTIEFWPDDQIFEVTEFDYEILAKRFRELAYLNPKITINFKDNRVGKHESFHFEGGISQFVTDLNKKEALTKAIFFSVDEEDVNVEVALLYNDTYSENLLSFVNNIKTPDGGTHEAGFRMGLTRVISNYIEANASAREKDNKITGDDVREGLIAIVSVKVPEPQFEGQTKGKLGSTYVRPIVSKASFEYLTKYFEENPIEAKAIMNKALMAARGREAAKKARELTRKKESLSVGTLPGKLADCQSKDPSESEIYLVEGDSAGGSAKQGRERSFQAILPLRGKILNVEKARLDKILKSEQIQNMITAFGCGIGEDFDLSKLRYHKIIIMTDADVDGSHIQTLLLTFFFRFMNELVANGHIYLAQPPLYLYKKAKKQIYLKDEKALSEYLIETGIEGLNYEGIGMNDLKDYLKIVAAYRAILKDLEKRFNVISVIRYMIENSNLVKGNNEELFSVIKQFLETQGHNILNHYINENEIRAFVQTQNGLEELVINEELFTHPLYEEASYIFDKIKDRSLEFDKDILEVLEDVETNAKKGATIQRYKGLGEMNPEQLWETTMDPSVRRLLKITIEDAQSANDTFNLFMGDEVEPRRDYIQAHAKDVKHLDV</sequence>
<gene>
    <name evidence="1" type="primary">gyrB</name>
    <name type="ordered locus">Cj0003</name>
</gene>